<organismHost>
    <name type="scientific">Aves</name>
    <dbReference type="NCBI Taxonomy" id="8782"/>
</organismHost>
<organismHost>
    <name type="scientific">Felis catus</name>
    <name type="common">Cat</name>
    <name type="synonym">Felis silvestris catus</name>
    <dbReference type="NCBI Taxonomy" id="9685"/>
</organismHost>
<organismHost>
    <name type="scientific">Homo sapiens</name>
    <name type="common">Human</name>
    <dbReference type="NCBI Taxonomy" id="9606"/>
</organismHost>
<organismHost>
    <name type="scientific">Panthera pardus</name>
    <name type="common">Leopard</name>
    <name type="synonym">Felis pardus</name>
    <dbReference type="NCBI Taxonomy" id="9691"/>
</organismHost>
<organismHost>
    <name type="scientific">Panthera tigris</name>
    <name type="common">Tiger</name>
    <dbReference type="NCBI Taxonomy" id="9694"/>
</organismHost>
<organismHost>
    <name type="scientific">Sus scrofa</name>
    <name type="common">Pig</name>
    <dbReference type="NCBI Taxonomy" id="9823"/>
</organismHost>
<comment type="function">
    <text evidence="1">Plays an important role in promoting lung pathology in both primary viral infection and secondary bacterial infection. Promotes alteration of mitochondrial morphology, dissipation of mitochondrial membrane potential, and cell death. Alternatively, inhibits the production of interferon in the infected cell at the level of host mitochondrial antiviral signaling MAVS. Its level of expression differs greatly depending on which cell type is infected, in a manner that is independent of the levels of expression of other viral proteins. Monocytic cells are more affected than epithelial cells. Seems to disable virus-infected monocytes or other host innate immune cells. During early stage of infection, predisposes the mitochondria to permeability transition through interaction with host SLC25A6/ANT3 and VDAC1. These proteins participate in the formation of the permeability transition pore complex (PTPC) responsible of the release of mitochondrial products that triggers apoptosis.</text>
</comment>
<comment type="subunit">
    <text evidence="1">Oligomer. Interacts with human SLC25A6/ANT3 and VDAC1. Interacts with host MAVS.</text>
</comment>
<comment type="subcellular location">
    <subcellularLocation>
        <location evidence="1">Host mitochondrion inner membrane</location>
    </subcellularLocation>
    <subcellularLocation>
        <location evidence="1">Host nucleus</location>
    </subcellularLocation>
    <subcellularLocation>
        <location evidence="1">Host cytoplasm</location>
        <location evidence="1">Host cytosol</location>
    </subcellularLocation>
    <text evidence="1">Inner mitochondrial membrane in most cells types. Otherwise is detected in the nucleus and cytosol.</text>
</comment>
<comment type="miscellaneous">
    <text>Is not encoded in all strains, and seems to be dispensable for replication.</text>
</comment>
<comment type="similarity">
    <text evidence="1">Belongs to the influenza viruses PB1-F2 family.</text>
</comment>
<organism>
    <name type="scientific">Influenza A virus (strain A/Silky Chicken/Hong Kong/SF189/2001 H5N1 genotype A)</name>
    <dbReference type="NCBI Taxonomy" id="196430"/>
    <lineage>
        <taxon>Viruses</taxon>
        <taxon>Riboviria</taxon>
        <taxon>Orthornavirae</taxon>
        <taxon>Negarnaviricota</taxon>
        <taxon>Polyploviricotina</taxon>
        <taxon>Insthoviricetes</taxon>
        <taxon>Articulavirales</taxon>
        <taxon>Orthomyxoviridae</taxon>
        <taxon>Alphainfluenzavirus</taxon>
        <taxon>Alphainfluenzavirus influenzae</taxon>
        <taxon>Influenza A virus</taxon>
    </lineage>
</organism>
<gene>
    <name evidence="1" type="primary">PB1</name>
</gene>
<protein>
    <recommendedName>
        <fullName evidence="1">Protein PB1-F2</fullName>
    </recommendedName>
</protein>
<proteinExistence type="inferred from homology"/>
<dbReference type="EMBL" id="AF509174">
    <property type="status" value="NOT_ANNOTATED_CDS"/>
    <property type="molecule type" value="Genomic_DNA"/>
</dbReference>
<dbReference type="SMR" id="P0C5U6"/>
<dbReference type="GO" id="GO:0044164">
    <property type="term" value="C:host cell cytosol"/>
    <property type="evidence" value="ECO:0007669"/>
    <property type="project" value="UniProtKB-SubCell"/>
</dbReference>
<dbReference type="GO" id="GO:0044192">
    <property type="term" value="C:host cell mitochondrial inner membrane"/>
    <property type="evidence" value="ECO:0007669"/>
    <property type="project" value="UniProtKB-SubCell"/>
</dbReference>
<dbReference type="GO" id="GO:0042025">
    <property type="term" value="C:host cell nucleus"/>
    <property type="evidence" value="ECO:0007669"/>
    <property type="project" value="UniProtKB-SubCell"/>
</dbReference>
<dbReference type="GO" id="GO:0016020">
    <property type="term" value="C:membrane"/>
    <property type="evidence" value="ECO:0007669"/>
    <property type="project" value="UniProtKB-UniRule"/>
</dbReference>
<dbReference type="GO" id="GO:0052150">
    <property type="term" value="P:symbiont-mediated perturbation of host apoptosis"/>
    <property type="evidence" value="ECO:0007669"/>
    <property type="project" value="UniProtKB-KW"/>
</dbReference>
<dbReference type="GO" id="GO:0039545">
    <property type="term" value="P:symbiont-mediated suppression of host cytoplasmic pattern recognition receptor signaling pathway via inhibition of MAVS activity"/>
    <property type="evidence" value="ECO:0007669"/>
    <property type="project" value="UniProtKB-KW"/>
</dbReference>
<dbReference type="HAMAP" id="MF_04064">
    <property type="entry name" value="INFV_PB1F2"/>
    <property type="match status" value="1"/>
</dbReference>
<dbReference type="InterPro" id="IPR021045">
    <property type="entry name" value="Flu_proapoptotic_PB1-F2"/>
</dbReference>
<dbReference type="Pfam" id="PF11986">
    <property type="entry name" value="PB1-F2"/>
    <property type="match status" value="1"/>
</dbReference>
<keyword id="KW-0053">Apoptosis</keyword>
<keyword id="KW-1035">Host cytoplasm</keyword>
<keyword id="KW-1043">Host membrane</keyword>
<keyword id="KW-1045">Host mitochondrion</keyword>
<keyword id="KW-1046">Host mitochondrion inner membrane</keyword>
<keyword id="KW-1048">Host nucleus</keyword>
<keyword id="KW-0945">Host-virus interaction</keyword>
<keyword id="KW-1090">Inhibition of host innate immune response by virus</keyword>
<keyword id="KW-1097">Inhibition of host MAVS by virus</keyword>
<keyword id="KW-1113">Inhibition of host RLR pathway by virus</keyword>
<keyword id="KW-0472">Membrane</keyword>
<keyword id="KW-1119">Modulation of host cell apoptosis by virus</keyword>
<keyword id="KW-0899">Viral immunoevasion</keyword>
<evidence type="ECO:0000255" key="1">
    <source>
        <dbReference type="HAMAP-Rule" id="MF_04064"/>
    </source>
</evidence>
<evidence type="ECO:0000256" key="2">
    <source>
        <dbReference type="SAM" id="MobiDB-lite"/>
    </source>
</evidence>
<sequence length="90" mass="10956">MEQEQDTPWTQSTEHINIQNRGNGQRTQRLEHPNSIRLMDHCLRIMSRVGMHRQIVYWKQWLSLKSPTQGSLKTRVLKRWKLFSKQEWIN</sequence>
<accession>P0C5U6</accession>
<name>PB1F2_I01A0</name>
<feature type="chain" id="PRO_0000311637" description="Protein PB1-F2">
    <location>
        <begin position="1"/>
        <end position="90"/>
    </location>
</feature>
<feature type="region of interest" description="Disordered" evidence="2">
    <location>
        <begin position="1"/>
        <end position="32"/>
    </location>
</feature>
<feature type="region of interest" description="Mitochondrial targeting sequence" evidence="1">
    <location>
        <begin position="65"/>
        <end position="87"/>
    </location>
</feature>
<feature type="compositionally biased region" description="Polar residues" evidence="2">
    <location>
        <begin position="1"/>
        <end position="27"/>
    </location>
</feature>
<feature type="site" description="High pathogenicity" evidence="1">
    <location>
        <position position="66"/>
    </location>
</feature>
<reference key="1">
    <citation type="journal article" date="2002" name="Proc. Natl. Acad. Sci. U.S.A.">
        <title>Emergence of multiple genotypes of H5N1 avian influenza viruses in Hong Kong SAR.</title>
        <authorList>
            <person name="Guan Y."/>
            <person name="Peiris J.S.M."/>
            <person name="Lipatov A.S."/>
            <person name="Ellis T.M."/>
            <person name="Dyrting K.C."/>
            <person name="Krauss S."/>
            <person name="Zhang L.J."/>
            <person name="Webster R.G."/>
            <person name="Shortridge K.F."/>
        </authorList>
    </citation>
    <scope>NUCLEOTIDE SEQUENCE [GENOMIC RNA]</scope>
</reference>